<accession>A0A0U5GIU9</accession>
<organism>
    <name type="scientific">Aspergillus calidoustus</name>
    <dbReference type="NCBI Taxonomy" id="454130"/>
    <lineage>
        <taxon>Eukaryota</taxon>
        <taxon>Fungi</taxon>
        <taxon>Dikarya</taxon>
        <taxon>Ascomycota</taxon>
        <taxon>Pezizomycotina</taxon>
        <taxon>Eurotiomycetes</taxon>
        <taxon>Eurotiomycetidae</taxon>
        <taxon>Eurotiales</taxon>
        <taxon>Aspergillaceae</taxon>
        <taxon>Aspergillus</taxon>
        <taxon>Aspergillus subgen. Nidulantes</taxon>
    </lineage>
</organism>
<protein>
    <recommendedName>
        <fullName evidence="5">Terpene cyclase ausL</fullName>
        <ecNumber evidence="7">4.2.3.-</ecNumber>
    </recommendedName>
    <alternativeName>
        <fullName evidence="5">Austinoid biosynthesis cluster protein L</fullName>
    </alternativeName>
</protein>
<keyword id="KW-0456">Lyase</keyword>
<keyword id="KW-0472">Membrane</keyword>
<keyword id="KW-1185">Reference proteome</keyword>
<keyword id="KW-0812">Transmembrane</keyword>
<keyword id="KW-1133">Transmembrane helix</keyword>
<dbReference type="EC" id="4.2.3.-" evidence="7"/>
<dbReference type="EMBL" id="CDMC01000024">
    <property type="protein sequence ID" value="CEL11271.1"/>
    <property type="molecule type" value="Genomic_DNA"/>
</dbReference>
<dbReference type="STRING" id="454130.A0A0U5GIU9"/>
<dbReference type="OMA" id="CNDIGWE"/>
<dbReference type="OrthoDB" id="5294024at2759"/>
<dbReference type="UniPathway" id="UPA00213"/>
<dbReference type="Proteomes" id="UP000054771">
    <property type="component" value="Unassembled WGS sequence"/>
</dbReference>
<dbReference type="GO" id="GO:0016020">
    <property type="term" value="C:membrane"/>
    <property type="evidence" value="ECO:0007669"/>
    <property type="project" value="UniProtKB-SubCell"/>
</dbReference>
<dbReference type="GO" id="GO:0016829">
    <property type="term" value="F:lyase activity"/>
    <property type="evidence" value="ECO:0007669"/>
    <property type="project" value="UniProtKB-KW"/>
</dbReference>
<dbReference type="GO" id="GO:0016114">
    <property type="term" value="P:terpenoid biosynthetic process"/>
    <property type="evidence" value="ECO:0007669"/>
    <property type="project" value="UniProtKB-UniPathway"/>
</dbReference>
<dbReference type="InterPro" id="IPR039020">
    <property type="entry name" value="PaxB-like"/>
</dbReference>
<dbReference type="PANTHER" id="PTHR42038">
    <property type="match status" value="1"/>
</dbReference>
<dbReference type="PANTHER" id="PTHR42038:SF2">
    <property type="entry name" value="TERPENE CYCLASE AUSL"/>
    <property type="match status" value="1"/>
</dbReference>
<dbReference type="Pfam" id="PF25129">
    <property type="entry name" value="Pyr4-TMTC"/>
    <property type="match status" value="1"/>
</dbReference>
<sequence length="247" mass="26946">MSHLTVSKILEDPFSALSLSEMLKILAALGWSTNYLAMAHRTHADRLPAIAVLPLCCDIAWEFTYAWIYPQASGHWQGVVRVWFFLHTAVLAATLRYAPNDWAGTPLGKSRARLVLLYVAVIGAFAAGQLCLALEMGGALGFHWGGALCQFLSSSGAVGQLLTRGHTRGASLVIWGARAISTAGGFVKLCIRFQHQVDGAPWLDSPMCWFYIGIVLSLDASYPVLYQLTRRHEEASGRGNSGKVKNR</sequence>
<gene>
    <name evidence="5" type="primary">ausL</name>
    <name type="ORF">ASPCAL14374</name>
</gene>
<proteinExistence type="inferred from homology"/>
<comment type="function">
    <text evidence="1 3 4">Terpene cyclase; part of the gene cluster that mediates the biosynthesis of calidodehydroaustin, a fungal meroterpenoid (PubMed:28233494, PubMed:29076725). The first step of the pathway is the synthesis of 3,5-dimethylorsellinic acid by the polyketide synthase ausA (PubMed:28233494). 3,5-dimethylorsellinic acid is then prenylated by the polyprenyl transferase ausN (PubMed:28233494). Further epoxidation by the FAD-dependent monooxygenase ausM and cyclization by the probable terpene cyclase ausL lead to the formation of protoaustinoid A (By similarity). Protoaustinoid A is then oxidized to spiro-lactone preaustinoid A3 by the combined action of the FAD-binding monooxygenases ausB and ausC, and the dioxygenase ausE (By similarity). Acid-catalyzed keto-rearrangement and ring contraction of the tetraketide portion of preaustinoid A3 by ausJ lead to the formation of preaustinoid A4 (By similarity). The aldo-keto reductase ausK, with the help of ausH, is involved in the next step by transforming preaustinoid A4 into isoaustinone which is in turn hydroxylated by the P450 monooxygenase ausI to form austinolide (By similarity). The cytochrome P450 monooxygenase ausG modifies austinolide to austinol (By similarity). Austinol is further acetylated to austin by the O-acetyltransferase ausP, which spontaneously changes to dehydroaustin (PubMed:28233494). The cytochrome P450 monooxygenase ausR then converts dehydroaustin is into 7-dehydrodehydroaustin (PubMed:28233494). The hydroxylation catalyzed by ausR permits the O-acetyltransferase ausQ to add an additional acetyl group to the molecule, leading to the formation of acetoxydehydroaustin (PubMed:28233494). The short chain dehydrogenase ausT catalyzes the reduction of the double bond present between carbon atoms 1 and 2 to convert 7-dehydrodehydroaustin into 1,2-dihydro-7-hydroxydehydroaustin (PubMed:28233494). AusQ catalyzes not only an acetylation reaction but also the addition of the PKS ausV diketide product to 1,2-dihydro-7-hydroxydehydroaustin, forming precalidodehydroaustin (PubMed:28233494). Finally, the iron/alpha-ketoglutarate-dependent dioxygenase converts precalidodehydroaustin into calidodehydroaustin (PubMed:28233494).</text>
</comment>
<comment type="pathway">
    <text evidence="7">Secondary metabolite biosynthesis; terpenoid biosynthesis.</text>
</comment>
<comment type="subcellular location">
    <subcellularLocation>
        <location evidence="2">Membrane</location>
        <topology evidence="2">Multi-pass membrane protein</topology>
    </subcellularLocation>
</comment>
<comment type="miscellaneous">
    <text evidence="8">In A.calidoustus, the austinoid gene cluster lies on a contiguous DNA region, while clusters from E.nidulans and P.brasilianum are split in their respective genomes. Genetic rearrangements provoked variability among the clusters and E.nidulans produces the least number of austionoid derivatives with the end products austinol and dehydroaustinol, while P.brasilianum can produce until acetoxydehydroaustin, and A.calidoustus produces the highest number of identified derivatives.</text>
</comment>
<comment type="similarity">
    <text evidence="6">Belongs to the paxB family.</text>
</comment>
<name>AUSL_ASPCI</name>
<reference key="1">
    <citation type="journal article" date="2016" name="Genome Announc.">
        <title>Draft genome sequences of fungus Aspergillus calidoustus.</title>
        <authorList>
            <person name="Horn F."/>
            <person name="Linde J."/>
            <person name="Mattern D.J."/>
            <person name="Walther G."/>
            <person name="Guthke R."/>
            <person name="Scherlach K."/>
            <person name="Martin K."/>
            <person name="Brakhage A.A."/>
            <person name="Petzke L."/>
            <person name="Valiante V."/>
        </authorList>
    </citation>
    <scope>NUCLEOTIDE SEQUENCE [LARGE SCALE GENOMIC DNA]</scope>
    <source>
        <strain>SF006504</strain>
    </source>
</reference>
<reference key="2">
    <citation type="journal article" date="2017" name="ACS Chem. Biol.">
        <title>Discovery of an Extended Austinoid Biosynthetic Pathway in Aspergillus calidoustus.</title>
        <authorList>
            <person name="Valiante V."/>
            <person name="Mattern D.J."/>
            <person name="Schueffler A."/>
            <person name="Horn F."/>
            <person name="Walther G."/>
            <person name="Scherlach K."/>
            <person name="Petzke L."/>
            <person name="Dickhaut J."/>
            <person name="Guthke R."/>
            <person name="Hertweck C."/>
            <person name="Nett M."/>
            <person name="Thines E."/>
            <person name="Brakhage A.A."/>
        </authorList>
    </citation>
    <scope>FUNCTION</scope>
    <scope>PATHWAY</scope>
</reference>
<reference key="3">
    <citation type="journal article" date="2017" name="ACS Chem. Biol.">
        <title>Rewiring of the austinoid biosynthetic pathway in filamentous fungi.</title>
        <authorList>
            <person name="Mattern D.J."/>
            <person name="Valiante V."/>
            <person name="Horn F."/>
            <person name="Petzke L."/>
            <person name="Brakhage A.A."/>
        </authorList>
    </citation>
    <scope>FUNCTION</scope>
</reference>
<feature type="chain" id="PRO_0000453856" description="Terpene cyclase ausL">
    <location>
        <begin position="1"/>
        <end position="247"/>
    </location>
</feature>
<feature type="transmembrane region" description="Helical" evidence="2">
    <location>
        <begin position="49"/>
        <end position="69"/>
    </location>
</feature>
<feature type="transmembrane region" description="Helical" evidence="2">
    <location>
        <begin position="75"/>
        <end position="95"/>
    </location>
</feature>
<feature type="transmembrane region" description="Helical" evidence="2">
    <location>
        <begin position="114"/>
        <end position="134"/>
    </location>
</feature>
<feature type="transmembrane region" description="Helical" evidence="2">
    <location>
        <begin position="138"/>
        <end position="158"/>
    </location>
</feature>
<feature type="transmembrane region" description="Helical" evidence="2">
    <location>
        <begin position="171"/>
        <end position="191"/>
    </location>
</feature>
<feature type="transmembrane region" description="Helical" evidence="2">
    <location>
        <begin position="206"/>
        <end position="226"/>
    </location>
</feature>
<evidence type="ECO:0000250" key="1">
    <source>
        <dbReference type="UniProtKB" id="Q5AR23"/>
    </source>
</evidence>
<evidence type="ECO:0000255" key="2"/>
<evidence type="ECO:0000269" key="3">
    <source>
    </source>
</evidence>
<evidence type="ECO:0000269" key="4">
    <source>
    </source>
</evidence>
<evidence type="ECO:0000303" key="5">
    <source>
    </source>
</evidence>
<evidence type="ECO:0000305" key="6"/>
<evidence type="ECO:0000305" key="7">
    <source>
    </source>
</evidence>
<evidence type="ECO:0000305" key="8">
    <source>
    </source>
</evidence>